<sequence>MSSFSNVGFVPHDGENEEDAINLAPKSSESFPAEDSIFADGSPRHRTLFDSKKRFKLRPPLLASTPRVICRFQQASSGSSAPYFTREPTFQPIQEFIEMSEHFHDITENSQGYRFLNTKEPFSRHHSALHHPRLSFDVLPKVIDFSRRWIGRARDTLYRLSVAYSGQEELGIERARDELDDRREHINLSEIFGGSHSQENSCSSGGVFNLNFDKSIEDRQLSFENIDLDSTSPQSTNDVIWLRDMTTVSTISEPILHPSSKISFTSSSPSPQRNPKNEAQKNSSSKREETSMFRSDPMKLYQMILVKEAAFECVAEIGKHGNVQFVDLNAKMSLYSRTFVKQMRRCEEMERKLRFLEKQVITCKPGLDPKSIDYTDLSAPTQAEMIQLEHKLDQLEREFLDLNNNDYALRKNLNSSKEFLQVMRLVDEFFQVHKEEEAKARFERSATTDDIEMFSKSFGFGGLPSSNEMPLTPLLGSDDNAWFVAGVLPLDKKESFERVLWRACRRTAFVRTSDASFTVNDPVTLEPLQKCVFIVFFKGESLRLIVEKVCDGFNATQYPCPKSSKDRKMKMSETEGRMNDLTVVIDTTQTHRYTILKDMSFEIPIWLKNIQIQKSVFAVMNMFTVDTNGFLAGECWIPAAEEDDVRQALHDGFKASGTEVEPILNELWTNAPPPTFHRTNKFTNVFQSIVDSYGVSQYCEVNPAPYTIITFPFLFAVMFGDAAHGAILLLAALFFIRNERKIESKKIRDEIFNTFYGGRYIMMLMGIFSIYTGFLYNDAFAKSFNVFGSGWSNSYNETQLDWWIARSYRKHREYSLELVPEKSFDIEKTYPFGVDPIWNIADNRLSFLNSMKMKASVIIGITQMTFGVFLSVLNHIHFKSYIDIISNFIPQVIFLSCIFIYLCIQIIVKWIFFSVNAENVFGFEYPGSHCAPSLLIGLINMFMFKKRNEGYLNENGEVYSNCHLGYWYPNQRLVETILISISLACIPIMLFGKPLWVRFVTSKRHKLQENKSLKSLRRNGTTVSAPTSPVVDAGPPRFEDAELLLADELDIGEDIHHSLSDIFVHQAIHTIEFVLGCVSHTASYLRLWALSLAHAQLSEVMWHMVLIQGIHTVDHIENETIAMCLKPVVACVAFFIFASLSLSILIMMEGLSAFLHALRLHWVEFQSKFYLGTGHPFHAFYLKESLENAQLITEETDRLADISSGQHLHI</sequence>
<accession>B2MZD0</accession>
<accession>A0A0K3AXB9</accession>
<accession>G5EDH1</accession>
<organism evidence="10">
    <name type="scientific">Caenorhabditis elegans</name>
    <dbReference type="NCBI Taxonomy" id="6239"/>
    <lineage>
        <taxon>Eukaryota</taxon>
        <taxon>Metazoa</taxon>
        <taxon>Ecdysozoa</taxon>
        <taxon>Nematoda</taxon>
        <taxon>Chromadorea</taxon>
        <taxon>Rhabditida</taxon>
        <taxon>Rhabditina</taxon>
        <taxon>Rhabditomorpha</taxon>
        <taxon>Rhabditoidea</taxon>
        <taxon>Rhabditidae</taxon>
        <taxon>Peloderinae</taxon>
        <taxon>Caenorhabditis</taxon>
    </lineage>
</organism>
<dbReference type="EMBL" id="AB055112">
    <property type="protein sequence ID" value="BAB62293.1"/>
    <property type="molecule type" value="mRNA"/>
</dbReference>
<dbReference type="EMBL" id="BX284604">
    <property type="protein sequence ID" value="CAB16306.2"/>
    <property type="molecule type" value="Genomic_DNA"/>
</dbReference>
<dbReference type="EMBL" id="BX284604">
    <property type="protein sequence ID" value="CAQ48388.2"/>
    <property type="molecule type" value="Genomic_DNA"/>
</dbReference>
<dbReference type="EMBL" id="BX284604">
    <property type="protein sequence ID" value="CTQ86638.1"/>
    <property type="molecule type" value="Genomic_DNA"/>
</dbReference>
<dbReference type="PIR" id="T19492">
    <property type="entry name" value="T19492"/>
</dbReference>
<dbReference type="RefSeq" id="NP_001129847.2">
    <property type="nucleotide sequence ID" value="NM_001136375.2"/>
</dbReference>
<dbReference type="RefSeq" id="NP_001299937.1">
    <molecule id="B2MZD0-3"/>
    <property type="nucleotide sequence ID" value="NM_001313008.3"/>
</dbReference>
<dbReference type="RefSeq" id="NP_001379242.1">
    <molecule id="B2MZD0-2"/>
    <property type="nucleotide sequence ID" value="NM_001392419.1"/>
</dbReference>
<dbReference type="RefSeq" id="NP_001379486.1">
    <molecule id="B2MZD0-1"/>
    <property type="nucleotide sequence ID" value="NM_001392418.1"/>
</dbReference>
<dbReference type="RefSeq" id="NP_502419.2">
    <property type="nucleotide sequence ID" value="NM_070018.5"/>
</dbReference>
<dbReference type="SMR" id="B2MZD0"/>
<dbReference type="FunCoup" id="B2MZD0">
    <property type="interactions" value="386"/>
</dbReference>
<dbReference type="STRING" id="6239.C26H9A.1b.1"/>
<dbReference type="TCDB" id="3.A.2.2.7">
    <property type="family name" value="the h+- or na+-translocating f-type, v-type and a-type atpase (f-atpase) superfamily"/>
</dbReference>
<dbReference type="GlyCosmos" id="B2MZD0">
    <property type="glycosylation" value="3 sites, No reported glycans"/>
</dbReference>
<dbReference type="PaxDb" id="6239-C26H9A.1b"/>
<dbReference type="PeptideAtlas" id="B2MZD0"/>
<dbReference type="EnsemblMetazoa" id="C26H9A.1a.1">
    <molecule id="B2MZD0-2"/>
    <property type="protein sequence ID" value="C26H9A.1a.1"/>
    <property type="gene ID" value="WBGene00006916"/>
</dbReference>
<dbReference type="EnsemblMetazoa" id="C26H9A.1b.1">
    <molecule id="B2MZD0-1"/>
    <property type="protein sequence ID" value="C26H9A.1b.1"/>
    <property type="gene ID" value="WBGene00006916"/>
</dbReference>
<dbReference type="EnsemblMetazoa" id="C26H9A.1c.1">
    <molecule id="B2MZD0-3"/>
    <property type="protein sequence ID" value="C26H9A.1c.1"/>
    <property type="gene ID" value="WBGene00006916"/>
</dbReference>
<dbReference type="GeneID" id="178219"/>
<dbReference type="KEGG" id="cel:CELE_C26H9A.1"/>
<dbReference type="AGR" id="WB:WBGene00006916"/>
<dbReference type="CTD" id="178219"/>
<dbReference type="WormBase" id="C26H9A.1a">
    <molecule id="B2MZD0-2"/>
    <property type="protein sequence ID" value="CE30882"/>
    <property type="gene ID" value="WBGene00006916"/>
    <property type="gene designation" value="vha-7"/>
</dbReference>
<dbReference type="WormBase" id="C26H9A.1b">
    <molecule id="B2MZD0-1"/>
    <property type="protein sequence ID" value="CE43617"/>
    <property type="gene ID" value="WBGene00006916"/>
    <property type="gene designation" value="vha-7"/>
</dbReference>
<dbReference type="WormBase" id="C26H9A.1c">
    <molecule id="B2MZD0-3"/>
    <property type="protein sequence ID" value="CE50146"/>
    <property type="gene ID" value="WBGene00006916"/>
    <property type="gene designation" value="vha-7"/>
</dbReference>
<dbReference type="eggNOG" id="KOG2189">
    <property type="taxonomic scope" value="Eukaryota"/>
</dbReference>
<dbReference type="GeneTree" id="ENSGT00950000182881"/>
<dbReference type="HOGENOM" id="CLU_005230_0_0_1"/>
<dbReference type="InParanoid" id="B2MZD0"/>
<dbReference type="OMA" id="ALFFIRN"/>
<dbReference type="OrthoDB" id="10264220at2759"/>
<dbReference type="PhylomeDB" id="B2MZD0"/>
<dbReference type="Reactome" id="R-CEL-1222556">
    <property type="pathway name" value="ROS and RNS production in phagocytes"/>
</dbReference>
<dbReference type="Reactome" id="R-CEL-6798695">
    <property type="pathway name" value="Neutrophil degranulation"/>
</dbReference>
<dbReference type="Reactome" id="R-CEL-77387">
    <property type="pathway name" value="Insulin receptor recycling"/>
</dbReference>
<dbReference type="Reactome" id="R-CEL-917977">
    <property type="pathway name" value="Transferrin endocytosis and recycling"/>
</dbReference>
<dbReference type="Reactome" id="R-CEL-9639288">
    <property type="pathway name" value="Amino acids regulate mTORC1"/>
</dbReference>
<dbReference type="Reactome" id="R-CEL-983712">
    <property type="pathway name" value="Ion channel transport"/>
</dbReference>
<dbReference type="PRO" id="PR:B2MZD0"/>
<dbReference type="Proteomes" id="UP000001940">
    <property type="component" value="Chromosome IV"/>
</dbReference>
<dbReference type="Bgee" id="WBGene00006916">
    <property type="expression patterns" value="Expressed in reproductive system and 9 other cell types or tissues"/>
</dbReference>
<dbReference type="ExpressionAtlas" id="B2MZD0">
    <property type="expression patterns" value="baseline and differential"/>
</dbReference>
<dbReference type="GO" id="GO:0005886">
    <property type="term" value="C:plasma membrane"/>
    <property type="evidence" value="ECO:0000318"/>
    <property type="project" value="GO_Central"/>
</dbReference>
<dbReference type="GO" id="GO:0033179">
    <property type="term" value="C:proton-transporting V-type ATPase, V0 domain"/>
    <property type="evidence" value="ECO:0007669"/>
    <property type="project" value="InterPro"/>
</dbReference>
<dbReference type="GO" id="GO:0016471">
    <property type="term" value="C:vacuolar proton-transporting V-type ATPase complex"/>
    <property type="evidence" value="ECO:0000318"/>
    <property type="project" value="GO_Central"/>
</dbReference>
<dbReference type="GO" id="GO:0051117">
    <property type="term" value="F:ATPase binding"/>
    <property type="evidence" value="ECO:0000318"/>
    <property type="project" value="GO_Central"/>
</dbReference>
<dbReference type="GO" id="GO:0046961">
    <property type="term" value="F:proton-transporting ATPase activity, rotational mechanism"/>
    <property type="evidence" value="ECO:0007669"/>
    <property type="project" value="InterPro"/>
</dbReference>
<dbReference type="GO" id="GO:0007035">
    <property type="term" value="P:vacuolar acidification"/>
    <property type="evidence" value="ECO:0000318"/>
    <property type="project" value="GO_Central"/>
</dbReference>
<dbReference type="InterPro" id="IPR002490">
    <property type="entry name" value="V-ATPase_116kDa_su"/>
</dbReference>
<dbReference type="PANTHER" id="PTHR11629:SF56">
    <property type="entry name" value="V-TYPE PROTON ATPASE 116 KDA SUBUNIT A 4"/>
    <property type="match status" value="1"/>
</dbReference>
<dbReference type="PANTHER" id="PTHR11629">
    <property type="entry name" value="VACUOLAR PROTON ATPASES"/>
    <property type="match status" value="1"/>
</dbReference>
<dbReference type="Pfam" id="PF01496">
    <property type="entry name" value="V_ATPase_I"/>
    <property type="match status" value="1"/>
</dbReference>
<proteinExistence type="evidence at transcript level"/>
<evidence type="ECO:0000250" key="1">
    <source>
        <dbReference type="UniProtKB" id="G5EGP4"/>
    </source>
</evidence>
<evidence type="ECO:0000250" key="2">
    <source>
        <dbReference type="UniProtKB" id="Q29466"/>
    </source>
</evidence>
<evidence type="ECO:0000255" key="3"/>
<evidence type="ECO:0000255" key="4">
    <source>
        <dbReference type="PROSITE-ProRule" id="PRU00498"/>
    </source>
</evidence>
<evidence type="ECO:0000256" key="5">
    <source>
        <dbReference type="SAM" id="MobiDB-lite"/>
    </source>
</evidence>
<evidence type="ECO:0000269" key="6">
    <source>
    </source>
</evidence>
<evidence type="ECO:0000303" key="7">
    <source>
    </source>
</evidence>
<evidence type="ECO:0000305" key="8"/>
<evidence type="ECO:0000312" key="9">
    <source>
        <dbReference type="EMBL" id="BAB62293.1"/>
    </source>
</evidence>
<evidence type="ECO:0000312" key="10">
    <source>
        <dbReference type="Proteomes" id="UP000001940"/>
    </source>
</evidence>
<evidence type="ECO:0000312" key="11">
    <source>
        <dbReference type="WormBase" id="C26H9A.1a"/>
    </source>
</evidence>
<evidence type="ECO:0000312" key="12">
    <source>
        <dbReference type="WormBase" id="C26H9A.1b"/>
    </source>
</evidence>
<evidence type="ECO:0000312" key="13">
    <source>
        <dbReference type="WormBase" id="C26H9A.1c"/>
    </source>
</evidence>
<feature type="chain" id="PRO_0000454083" description="V-type proton ATPase 116 kDa subunit a 4">
    <location>
        <begin position="1"/>
        <end position="1210"/>
    </location>
</feature>
<feature type="topological domain" description="Cytoplasmic" evidence="8">
    <location>
        <begin position="1"/>
        <end position="715"/>
    </location>
</feature>
<feature type="transmembrane region" description="Helical" evidence="3">
    <location>
        <begin position="716"/>
        <end position="736"/>
    </location>
</feature>
<feature type="topological domain" description="Extracellular" evidence="8">
    <location>
        <begin position="737"/>
        <end position="760"/>
    </location>
</feature>
<feature type="transmembrane region" description="Helical" evidence="3">
    <location>
        <begin position="761"/>
        <end position="781"/>
    </location>
</feature>
<feature type="topological domain" description="Cytoplasmic" evidence="8">
    <location>
        <begin position="782"/>
        <end position="855"/>
    </location>
</feature>
<feature type="transmembrane region" description="Helical" evidence="3">
    <location>
        <begin position="856"/>
        <end position="876"/>
    </location>
</feature>
<feature type="topological domain" description="Extracellular" evidence="8">
    <location>
        <begin position="877"/>
        <end position="892"/>
    </location>
</feature>
<feature type="transmembrane region" description="Helical" evidence="3">
    <location>
        <begin position="893"/>
        <end position="913"/>
    </location>
</feature>
<feature type="topological domain" description="Cytoplasmic" evidence="8">
    <location>
        <begin position="914"/>
        <end position="976"/>
    </location>
</feature>
<feature type="transmembrane region" description="Helical" evidence="3">
    <location>
        <begin position="977"/>
        <end position="997"/>
    </location>
</feature>
<feature type="topological domain" description="Extracellular" evidence="8">
    <location>
        <begin position="998"/>
        <end position="1127"/>
    </location>
</feature>
<feature type="transmembrane region" description="Helical" evidence="3">
    <location>
        <begin position="1128"/>
        <end position="1148"/>
    </location>
</feature>
<feature type="topological domain" description="Cytoplasmic" evidence="8">
    <location>
        <begin position="1149"/>
        <end position="1210"/>
    </location>
</feature>
<feature type="region of interest" description="Disordered" evidence="5">
    <location>
        <begin position="259"/>
        <end position="292"/>
    </location>
</feature>
<feature type="coiled-coil region" evidence="3">
    <location>
        <begin position="339"/>
        <end position="405"/>
    </location>
</feature>
<feature type="compositionally biased region" description="Low complexity" evidence="5">
    <location>
        <begin position="259"/>
        <end position="271"/>
    </location>
</feature>
<feature type="compositionally biased region" description="Basic and acidic residues" evidence="5">
    <location>
        <begin position="275"/>
        <end position="291"/>
    </location>
</feature>
<feature type="glycosylation site" description="N-linked (GlcNAc...) asparagine" evidence="4">
    <location>
        <position position="1010"/>
    </location>
</feature>
<feature type="glycosylation site" description="N-linked (GlcNAc...) asparagine" evidence="4">
    <location>
        <position position="1019"/>
    </location>
</feature>
<feature type="glycosylation site" description="N-linked (GlcNAc...) asparagine" evidence="4">
    <location>
        <position position="1118"/>
    </location>
</feature>
<feature type="splice variant" id="VSP_061243" description="In isoform a." evidence="8">
    <location>
        <begin position="1"/>
        <end position="244"/>
    </location>
</feature>
<feature type="splice variant" id="VSP_061244" description="In isoform c." evidence="8">
    <original>LNAKMSLYS</original>
    <variation>VEFITGFLF</variation>
    <location>
        <begin position="328"/>
        <end position="336"/>
    </location>
</feature>
<feature type="splice variant" id="VSP_061245" description="In isoform c." evidence="8">
    <location>
        <begin position="337"/>
        <end position="1210"/>
    </location>
</feature>
<gene>
    <name evidence="7 12" type="primary">vha-7</name>
    <name evidence="12" type="ORF">C26H9A.1</name>
</gene>
<reference evidence="9" key="1">
    <citation type="journal article" date="2001" name="J. Biol. Chem.">
        <title>Four subunit a isoforms of Caenorhabditis elegans vacuolar H+-ATPase. Cell-specific expression during development.</title>
        <authorList>
            <person name="Oka T."/>
            <person name="Toyomura T."/>
            <person name="Honjo K."/>
            <person name="Wada Y."/>
            <person name="Futai M."/>
        </authorList>
    </citation>
    <scope>NUCLEOTIDE SEQUENCE [MRNA] (ISOFORM A)</scope>
    <scope>TISSUE SPECIFICITY</scope>
    <scope>DEVELOPMENTAL STAGE</scope>
    <scope>DISRUPTION PHENOTYPE</scope>
</reference>
<reference evidence="10" key="2">
    <citation type="journal article" date="1998" name="Science">
        <title>Genome sequence of the nematode C. elegans: a platform for investigating biology.</title>
        <authorList>
            <consortium name="The C. elegans sequencing consortium"/>
        </authorList>
    </citation>
    <scope>NUCLEOTIDE SEQUENCE [LARGE SCALE GENOMIC DNA]</scope>
    <source>
        <strain evidence="10">Bristol N2</strain>
    </source>
</reference>
<protein>
    <recommendedName>
        <fullName evidence="8">V-type proton ATPase 116 kDa subunit a 4</fullName>
        <shortName evidence="8">V-ATPase 116 kDa isoform a 4</shortName>
    </recommendedName>
</protein>
<name>VPP4_CAEEL</name>
<keyword id="KW-0025">Alternative splicing</keyword>
<keyword id="KW-0175">Coiled coil</keyword>
<keyword id="KW-0325">Glycoprotein</keyword>
<keyword id="KW-0406">Ion transport</keyword>
<keyword id="KW-0472">Membrane</keyword>
<keyword id="KW-1185">Reference proteome</keyword>
<keyword id="KW-0812">Transmembrane</keyword>
<keyword id="KW-1133">Transmembrane helix</keyword>
<keyword id="KW-0813">Transport</keyword>
<comment type="function">
    <text evidence="1 2">Subunit of the V0 complex of vacuolar(H+)-ATPase (V-ATPase), a multisubunit enzyme composed of a peripheral complex (V1) that hydrolyzes ATP and a membrane integral complex (V0) that translocates protons (By similarity). V-ATPase is responsible for acidifying and maintaining the pH of intracellular compartments and in some cell types, is targeted to the plasma membrane, where it is responsible for acidifying the extracellular environment (By similarity).</text>
</comment>
<comment type="subunit">
    <text evidence="2">V-ATPase is a heteromultimeric enzyme made up of two complexes: the ATP-hydrolytic V1 complex and the proton translocation V0 complex (By similarity). The V1 complex consists of three catalytic AB heterodimers that form a heterohexamer, three peripheral stalks each consisting of EG heterodimers, one central rotor including subunits D and F, and the regulatory subunits C and H (By similarity). The proton translocation complex V0 consists of the proton transport subunit a, a ring of proteolipid subunits c9c'', rotary subunit d, subunits e and f, and the accessory subunits vah-19/Ac45 and vah-20/PRR (By similarity).</text>
</comment>
<comment type="subcellular location">
    <subcellularLocation>
        <location evidence="3">Membrane</location>
        <topology evidence="3">Multi-pass membrane protein</topology>
    </subcellularLocation>
</comment>
<comment type="alternative products">
    <event type="alternative splicing"/>
    <isoform>
        <id>B2MZD0-1</id>
        <name evidence="12">b</name>
        <sequence type="displayed"/>
    </isoform>
    <isoform>
        <id>B2MZD0-2</id>
        <name evidence="11">a</name>
        <sequence type="described" ref="VSP_061243"/>
    </isoform>
    <isoform>
        <id>B2MZD0-3</id>
        <name evidence="13">c</name>
        <sequence type="described" ref="VSP_061244 VSP_061245"/>
    </isoform>
</comment>
<comment type="tissue specificity">
    <text evidence="6">Expressed in uterus.</text>
</comment>
<comment type="developmental stage">
    <text evidence="6">Expressed in hypodermal cells in L1 larvae (PubMed:11441002). No expressed in embryos (PubMed:11441002).</text>
</comment>
<comment type="disruption phenotype">
    <text evidence="6">RNAi-mediated knockdown does not affect embryonic or larval development.</text>
</comment>
<comment type="similarity">
    <text evidence="8">Belongs to the V-ATPase 116 kDa subunit family.</text>
</comment>